<reference key="1">
    <citation type="journal article" date="2011" name="J. Bacteriol.">
        <title>Comparative genomics of 28 Salmonella enterica isolates: evidence for CRISPR-mediated adaptive sublineage evolution.</title>
        <authorList>
            <person name="Fricke W.F."/>
            <person name="Mammel M.K."/>
            <person name="McDermott P.F."/>
            <person name="Tartera C."/>
            <person name="White D.G."/>
            <person name="Leclerc J.E."/>
            <person name="Ravel J."/>
            <person name="Cebula T.A."/>
        </authorList>
    </citation>
    <scope>NUCLEOTIDE SEQUENCE [LARGE SCALE GENOMIC DNA]</scope>
    <source>
        <strain>SL483</strain>
    </source>
</reference>
<dbReference type="EC" id="3.1.-.-" evidence="1"/>
<dbReference type="EMBL" id="CP001138">
    <property type="protein sequence ID" value="ACH48616.1"/>
    <property type="molecule type" value="Genomic_DNA"/>
</dbReference>
<dbReference type="RefSeq" id="WP_001519360.1">
    <property type="nucleotide sequence ID" value="NC_011149.1"/>
</dbReference>
<dbReference type="SMR" id="B5F4R7"/>
<dbReference type="KEGG" id="sea:SeAg_B3115"/>
<dbReference type="HOGENOM" id="CLU_004675_1_2_6"/>
<dbReference type="Proteomes" id="UP000008819">
    <property type="component" value="Chromosome"/>
</dbReference>
<dbReference type="GO" id="GO:0008409">
    <property type="term" value="F:5'-3' exonuclease activity"/>
    <property type="evidence" value="ECO:0007669"/>
    <property type="project" value="InterPro"/>
</dbReference>
<dbReference type="GO" id="GO:0017108">
    <property type="term" value="F:5'-flap endonuclease activity"/>
    <property type="evidence" value="ECO:0007669"/>
    <property type="project" value="UniProtKB-UniRule"/>
</dbReference>
<dbReference type="GO" id="GO:0003677">
    <property type="term" value="F:DNA binding"/>
    <property type="evidence" value="ECO:0007669"/>
    <property type="project" value="UniProtKB-UniRule"/>
</dbReference>
<dbReference type="GO" id="GO:0000287">
    <property type="term" value="F:magnesium ion binding"/>
    <property type="evidence" value="ECO:0007669"/>
    <property type="project" value="UniProtKB-UniRule"/>
</dbReference>
<dbReference type="GO" id="GO:0030955">
    <property type="term" value="F:potassium ion binding"/>
    <property type="evidence" value="ECO:0007669"/>
    <property type="project" value="UniProtKB-UniRule"/>
</dbReference>
<dbReference type="GO" id="GO:0033567">
    <property type="term" value="P:DNA replication, Okazaki fragment processing"/>
    <property type="evidence" value="ECO:0007669"/>
    <property type="project" value="UniProtKB-UniRule"/>
</dbReference>
<dbReference type="CDD" id="cd09898">
    <property type="entry name" value="H3TH_53EXO"/>
    <property type="match status" value="1"/>
</dbReference>
<dbReference type="CDD" id="cd09859">
    <property type="entry name" value="PIN_53EXO"/>
    <property type="match status" value="1"/>
</dbReference>
<dbReference type="FunFam" id="1.10.150.20:FF:000003">
    <property type="entry name" value="DNA polymerase I"/>
    <property type="match status" value="1"/>
</dbReference>
<dbReference type="FunFam" id="3.40.50.1010:FF:000011">
    <property type="entry name" value="Flap endonuclease Xni"/>
    <property type="match status" value="1"/>
</dbReference>
<dbReference type="Gene3D" id="1.10.150.20">
    <property type="entry name" value="5' to 3' exonuclease, C-terminal subdomain"/>
    <property type="match status" value="1"/>
</dbReference>
<dbReference type="Gene3D" id="3.40.50.1010">
    <property type="entry name" value="5'-nuclease"/>
    <property type="match status" value="1"/>
</dbReference>
<dbReference type="HAMAP" id="MF_01192">
    <property type="entry name" value="Xni"/>
    <property type="match status" value="1"/>
</dbReference>
<dbReference type="InterPro" id="IPR020046">
    <property type="entry name" value="5-3_exonucl_a-hlix_arch_N"/>
</dbReference>
<dbReference type="InterPro" id="IPR002421">
    <property type="entry name" value="5-3_exonuclease"/>
</dbReference>
<dbReference type="InterPro" id="IPR036279">
    <property type="entry name" value="5-3_exonuclease_C_sf"/>
</dbReference>
<dbReference type="InterPro" id="IPR020045">
    <property type="entry name" value="DNA_polI_H3TH"/>
</dbReference>
<dbReference type="InterPro" id="IPR038969">
    <property type="entry name" value="FEN"/>
</dbReference>
<dbReference type="InterPro" id="IPR008918">
    <property type="entry name" value="HhH2"/>
</dbReference>
<dbReference type="InterPro" id="IPR029060">
    <property type="entry name" value="PIN-like_dom_sf"/>
</dbReference>
<dbReference type="InterPro" id="IPR022895">
    <property type="entry name" value="Xni"/>
</dbReference>
<dbReference type="NCBIfam" id="NF007017">
    <property type="entry name" value="PRK09482.1"/>
    <property type="match status" value="1"/>
</dbReference>
<dbReference type="PANTHER" id="PTHR42646:SF2">
    <property type="entry name" value="5'-3' EXONUCLEASE FAMILY PROTEIN"/>
    <property type="match status" value="1"/>
</dbReference>
<dbReference type="PANTHER" id="PTHR42646">
    <property type="entry name" value="FLAP ENDONUCLEASE XNI"/>
    <property type="match status" value="1"/>
</dbReference>
<dbReference type="Pfam" id="PF01367">
    <property type="entry name" value="5_3_exonuc"/>
    <property type="match status" value="1"/>
</dbReference>
<dbReference type="Pfam" id="PF02739">
    <property type="entry name" value="5_3_exonuc_N"/>
    <property type="match status" value="1"/>
</dbReference>
<dbReference type="SMART" id="SM00475">
    <property type="entry name" value="53EXOc"/>
    <property type="match status" value="1"/>
</dbReference>
<dbReference type="SMART" id="SM00279">
    <property type="entry name" value="HhH2"/>
    <property type="match status" value="1"/>
</dbReference>
<dbReference type="SUPFAM" id="SSF47807">
    <property type="entry name" value="5' to 3' exonuclease, C-terminal subdomain"/>
    <property type="match status" value="1"/>
</dbReference>
<dbReference type="SUPFAM" id="SSF88723">
    <property type="entry name" value="PIN domain-like"/>
    <property type="match status" value="1"/>
</dbReference>
<sequence length="251" mass="28150">MAAHLLIVDALNLIRRIHAVQGSPCVETCQHALDQLIIHSQPTHAVAVFDDDARSSGWRHQRLPDYKAGRPPMPDDLHNEMPALRAAFEQRGVRCWASDGNEADDLAATLALKVTEAGHQATIVSTDKGYCQLLSPGLRIRDYFQKRWLDAPFIEKEFGVLPRQLPDYWGLAGISSSKVPGVAGIGPKSATQLLIQFQNLEGIYAHLDEVPEKWRKKLETHKEMAFLCRDIARLQTDLHIDGNLQQLRLAR</sequence>
<accession>B5F4R7</accession>
<feature type="chain" id="PRO_1000138386" description="Flap endonuclease Xni">
    <location>
        <begin position="1"/>
        <end position="251"/>
    </location>
</feature>
<feature type="domain" description="5'-3' exonuclease" evidence="1">
    <location>
        <begin position="160"/>
        <end position="249"/>
    </location>
</feature>
<feature type="region of interest" description="Interaction with DNA" evidence="1">
    <location>
        <begin position="184"/>
        <end position="189"/>
    </location>
</feature>
<feature type="binding site" evidence="1">
    <location>
        <position position="104"/>
    </location>
    <ligand>
        <name>Mg(2+)</name>
        <dbReference type="ChEBI" id="CHEBI:18420"/>
    </ligand>
</feature>
<feature type="binding site" evidence="1">
    <location>
        <position position="171"/>
    </location>
    <ligand>
        <name>K(+)</name>
        <dbReference type="ChEBI" id="CHEBI:29103"/>
    </ligand>
</feature>
<feature type="binding site" evidence="1">
    <location>
        <position position="172"/>
    </location>
    <ligand>
        <name>K(+)</name>
        <dbReference type="ChEBI" id="CHEBI:29103"/>
    </ligand>
</feature>
<feature type="binding site" evidence="1">
    <location>
        <position position="180"/>
    </location>
    <ligand>
        <name>K(+)</name>
        <dbReference type="ChEBI" id="CHEBI:29103"/>
    </ligand>
</feature>
<feature type="binding site" evidence="1">
    <location>
        <position position="182"/>
    </location>
    <ligand>
        <name>K(+)</name>
        <dbReference type="ChEBI" id="CHEBI:29103"/>
    </ligand>
</feature>
<feature type="binding site" evidence="1">
    <location>
        <position position="185"/>
    </location>
    <ligand>
        <name>K(+)</name>
        <dbReference type="ChEBI" id="CHEBI:29103"/>
    </ligand>
</feature>
<organism>
    <name type="scientific">Salmonella agona (strain SL483)</name>
    <dbReference type="NCBI Taxonomy" id="454166"/>
    <lineage>
        <taxon>Bacteria</taxon>
        <taxon>Pseudomonadati</taxon>
        <taxon>Pseudomonadota</taxon>
        <taxon>Gammaproteobacteria</taxon>
        <taxon>Enterobacterales</taxon>
        <taxon>Enterobacteriaceae</taxon>
        <taxon>Salmonella</taxon>
    </lineage>
</organism>
<comment type="function">
    <text evidence="1">Has flap endonuclease activity. During DNA replication, flap endonucleases cleave the 5'-overhanging flap structure that is generated by displacement synthesis when DNA polymerase encounters the 5'-end of a downstream Okazaki fragment.</text>
</comment>
<comment type="cofactor">
    <cofactor evidence="1">
        <name>Mg(2+)</name>
        <dbReference type="ChEBI" id="CHEBI:18420"/>
    </cofactor>
    <text evidence="1">Binds 2 Mg(2+) per subunit. Only one magnesium ion has a direct interaction with the protein, the other interactions are indirect.</text>
</comment>
<comment type="cofactor">
    <cofactor evidence="1">
        <name>K(+)</name>
        <dbReference type="ChEBI" id="CHEBI:29103"/>
    </cofactor>
    <text evidence="1">Binds 1 K(+) per subunit. The potassium ion strongly increases the affinity for DNA.</text>
</comment>
<comment type="similarity">
    <text evidence="1">Belongs to the Xni family.</text>
</comment>
<gene>
    <name evidence="1" type="primary">xni</name>
    <name evidence="1" type="synonym">ygdG</name>
    <name type="ordered locus">SeAg_B3115</name>
</gene>
<protein>
    <recommendedName>
        <fullName evidence="1">Flap endonuclease Xni</fullName>
        <shortName evidence="1">FEN</shortName>
        <ecNumber evidence="1">3.1.-.-</ecNumber>
    </recommendedName>
</protein>
<proteinExistence type="inferred from homology"/>
<name>XNI_SALA4</name>
<keyword id="KW-0238">DNA-binding</keyword>
<keyword id="KW-0255">Endonuclease</keyword>
<keyword id="KW-0378">Hydrolase</keyword>
<keyword id="KW-0460">Magnesium</keyword>
<keyword id="KW-0479">Metal-binding</keyword>
<keyword id="KW-0540">Nuclease</keyword>
<keyword id="KW-0630">Potassium</keyword>
<evidence type="ECO:0000255" key="1">
    <source>
        <dbReference type="HAMAP-Rule" id="MF_01192"/>
    </source>
</evidence>